<sequence length="174" mass="17952">MSLNRNEKEAVVAQVSAQVAKAQTLALAEYRGLTVEHLNALRKQAREKGVYLHVLKNTLARRAVAGTSFEVAAGSMAGPLIYGFSEDAVAAAKVIADFAKGNDKLVIKAGAYAGKALDAEGVKALASIPSKEVLLSQLLGLMQSPVSRIARVLAALAEQRGGSAEAAPAEAAAA</sequence>
<reference key="1">
    <citation type="journal article" date="2007" name="J. Bacteriol.">
        <title>Whole-genome analysis of the methyl tert-butyl ether-degrading beta-proteobacterium Methylibium petroleiphilum PM1.</title>
        <authorList>
            <person name="Kane S.R."/>
            <person name="Chakicherla A.Y."/>
            <person name="Chain P.S.G."/>
            <person name="Schmidt R."/>
            <person name="Shin M.W."/>
            <person name="Legler T.C."/>
            <person name="Scow K.M."/>
            <person name="Larimer F.W."/>
            <person name="Lucas S.M."/>
            <person name="Richardson P.M."/>
            <person name="Hristova K.R."/>
        </authorList>
    </citation>
    <scope>NUCLEOTIDE SEQUENCE [LARGE SCALE GENOMIC DNA]</scope>
    <source>
        <strain>ATCC BAA-1232 / LMG 22953 / PM1</strain>
    </source>
</reference>
<proteinExistence type="inferred from homology"/>
<gene>
    <name evidence="1" type="primary">rplJ</name>
    <name type="ordered locus">Mpe_A3453</name>
</gene>
<accession>A2SLG7</accession>
<evidence type="ECO:0000255" key="1">
    <source>
        <dbReference type="HAMAP-Rule" id="MF_00362"/>
    </source>
</evidence>
<evidence type="ECO:0000305" key="2"/>
<name>RL10_METPP</name>
<protein>
    <recommendedName>
        <fullName evidence="1">Large ribosomal subunit protein uL10</fullName>
    </recommendedName>
    <alternativeName>
        <fullName evidence="2">50S ribosomal protein L10</fullName>
    </alternativeName>
</protein>
<organism>
    <name type="scientific">Methylibium petroleiphilum (strain ATCC BAA-1232 / LMG 22953 / PM1)</name>
    <dbReference type="NCBI Taxonomy" id="420662"/>
    <lineage>
        <taxon>Bacteria</taxon>
        <taxon>Pseudomonadati</taxon>
        <taxon>Pseudomonadota</taxon>
        <taxon>Betaproteobacteria</taxon>
        <taxon>Burkholderiales</taxon>
        <taxon>Sphaerotilaceae</taxon>
        <taxon>Methylibium</taxon>
    </lineage>
</organism>
<comment type="function">
    <text evidence="1">Forms part of the ribosomal stalk, playing a central role in the interaction of the ribosome with GTP-bound translation factors.</text>
</comment>
<comment type="subunit">
    <text evidence="1">Part of the ribosomal stalk of the 50S ribosomal subunit. The N-terminus interacts with L11 and the large rRNA to form the base of the stalk. The C-terminus forms an elongated spine to which L12 dimers bind in a sequential fashion forming a multimeric L10(L12)X complex.</text>
</comment>
<comment type="similarity">
    <text evidence="1">Belongs to the universal ribosomal protein uL10 family.</text>
</comment>
<feature type="chain" id="PRO_1000005533" description="Large ribosomal subunit protein uL10">
    <location>
        <begin position="1"/>
        <end position="174"/>
    </location>
</feature>
<dbReference type="EMBL" id="CP000555">
    <property type="protein sequence ID" value="ABM96406.1"/>
    <property type="molecule type" value="Genomic_DNA"/>
</dbReference>
<dbReference type="RefSeq" id="WP_011831027.1">
    <property type="nucleotide sequence ID" value="NC_008825.1"/>
</dbReference>
<dbReference type="SMR" id="A2SLG7"/>
<dbReference type="STRING" id="420662.Mpe_A3453"/>
<dbReference type="KEGG" id="mpt:Mpe_A3453"/>
<dbReference type="eggNOG" id="COG0244">
    <property type="taxonomic scope" value="Bacteria"/>
</dbReference>
<dbReference type="HOGENOM" id="CLU_092227_0_1_4"/>
<dbReference type="Proteomes" id="UP000000366">
    <property type="component" value="Chromosome"/>
</dbReference>
<dbReference type="GO" id="GO:1990904">
    <property type="term" value="C:ribonucleoprotein complex"/>
    <property type="evidence" value="ECO:0007669"/>
    <property type="project" value="UniProtKB-KW"/>
</dbReference>
<dbReference type="GO" id="GO:0005840">
    <property type="term" value="C:ribosome"/>
    <property type="evidence" value="ECO:0007669"/>
    <property type="project" value="UniProtKB-KW"/>
</dbReference>
<dbReference type="GO" id="GO:0070180">
    <property type="term" value="F:large ribosomal subunit rRNA binding"/>
    <property type="evidence" value="ECO:0007669"/>
    <property type="project" value="UniProtKB-UniRule"/>
</dbReference>
<dbReference type="GO" id="GO:0006412">
    <property type="term" value="P:translation"/>
    <property type="evidence" value="ECO:0007669"/>
    <property type="project" value="UniProtKB-UniRule"/>
</dbReference>
<dbReference type="CDD" id="cd05797">
    <property type="entry name" value="Ribosomal_L10"/>
    <property type="match status" value="1"/>
</dbReference>
<dbReference type="Gene3D" id="3.30.70.1730">
    <property type="match status" value="1"/>
</dbReference>
<dbReference type="Gene3D" id="6.10.250.290">
    <property type="match status" value="1"/>
</dbReference>
<dbReference type="HAMAP" id="MF_00362">
    <property type="entry name" value="Ribosomal_uL10"/>
    <property type="match status" value="1"/>
</dbReference>
<dbReference type="InterPro" id="IPR001790">
    <property type="entry name" value="Ribosomal_uL10"/>
</dbReference>
<dbReference type="InterPro" id="IPR043141">
    <property type="entry name" value="Ribosomal_uL10-like_sf"/>
</dbReference>
<dbReference type="InterPro" id="IPR022973">
    <property type="entry name" value="Ribosomal_uL10_bac"/>
</dbReference>
<dbReference type="InterPro" id="IPR047865">
    <property type="entry name" value="Ribosomal_uL10_bac_type"/>
</dbReference>
<dbReference type="NCBIfam" id="NF000955">
    <property type="entry name" value="PRK00099.1-1"/>
    <property type="match status" value="1"/>
</dbReference>
<dbReference type="PANTHER" id="PTHR11560">
    <property type="entry name" value="39S RIBOSOMAL PROTEIN L10, MITOCHONDRIAL"/>
    <property type="match status" value="1"/>
</dbReference>
<dbReference type="Pfam" id="PF00466">
    <property type="entry name" value="Ribosomal_L10"/>
    <property type="match status" value="1"/>
</dbReference>
<dbReference type="SUPFAM" id="SSF160369">
    <property type="entry name" value="Ribosomal protein L10-like"/>
    <property type="match status" value="1"/>
</dbReference>
<keyword id="KW-1185">Reference proteome</keyword>
<keyword id="KW-0687">Ribonucleoprotein</keyword>
<keyword id="KW-0689">Ribosomal protein</keyword>
<keyword id="KW-0694">RNA-binding</keyword>
<keyword id="KW-0699">rRNA-binding</keyword>